<proteinExistence type="evidence at transcript level"/>
<protein>
    <recommendedName>
        <fullName evidence="1">Telomerase Cajal body protein 1</fullName>
    </recommendedName>
    <alternativeName>
        <fullName evidence="5">Guanine nucleotide-binding protein beta 5</fullName>
    </alternativeName>
    <alternativeName>
        <fullName evidence="1">WD repeat-containing protein 79</fullName>
    </alternativeName>
    <alternativeName>
        <fullName evidence="1">WD40 repeat-containing protein antisense to TP53 gene homolog</fullName>
    </alternativeName>
</protein>
<organism>
    <name type="scientific">Mesocricetus auratus</name>
    <name type="common">Golden hamster</name>
    <dbReference type="NCBI Taxonomy" id="10036"/>
    <lineage>
        <taxon>Eukaryota</taxon>
        <taxon>Metazoa</taxon>
        <taxon>Chordata</taxon>
        <taxon>Craniata</taxon>
        <taxon>Vertebrata</taxon>
        <taxon>Euteleostomi</taxon>
        <taxon>Mammalia</taxon>
        <taxon>Eutheria</taxon>
        <taxon>Euarchontoglires</taxon>
        <taxon>Glires</taxon>
        <taxon>Rodentia</taxon>
        <taxon>Myomorpha</taxon>
        <taxon>Muroidea</taxon>
        <taxon>Cricetidae</taxon>
        <taxon>Cricetinae</taxon>
        <taxon>Mesocricetus</taxon>
    </lineage>
</organism>
<accession>Q60525</accession>
<dbReference type="EMBL" id="U13152">
    <property type="protein sequence ID" value="AAA85261.1"/>
    <property type="molecule type" value="mRNA"/>
</dbReference>
<dbReference type="RefSeq" id="NP_001268518.1">
    <property type="nucleotide sequence ID" value="NM_001281589.1"/>
</dbReference>
<dbReference type="SMR" id="Q60525"/>
<dbReference type="STRING" id="10036.ENSMAUP00000007221"/>
<dbReference type="Ensembl" id="ENSMAUT00000011030">
    <property type="protein sequence ID" value="ENSMAUP00000007221"/>
    <property type="gene ID" value="ENSMAUG00000008952"/>
</dbReference>
<dbReference type="GeneID" id="101834343"/>
<dbReference type="KEGG" id="maua:101834343"/>
<dbReference type="CTD" id="55135"/>
<dbReference type="eggNOG" id="KOG2919">
    <property type="taxonomic scope" value="Eukaryota"/>
</dbReference>
<dbReference type="OrthoDB" id="239865at2759"/>
<dbReference type="Proteomes" id="UP000189706">
    <property type="component" value="Unplaced"/>
</dbReference>
<dbReference type="GO" id="GO:0015030">
    <property type="term" value="C:Cajal body"/>
    <property type="evidence" value="ECO:0000250"/>
    <property type="project" value="UniProtKB"/>
</dbReference>
<dbReference type="GO" id="GO:0000781">
    <property type="term" value="C:chromosome, telomeric region"/>
    <property type="evidence" value="ECO:0007669"/>
    <property type="project" value="UniProtKB-SubCell"/>
</dbReference>
<dbReference type="GO" id="GO:0005829">
    <property type="term" value="C:cytosol"/>
    <property type="evidence" value="ECO:0007669"/>
    <property type="project" value="Ensembl"/>
</dbReference>
<dbReference type="GO" id="GO:0035861">
    <property type="term" value="C:site of double-strand break"/>
    <property type="evidence" value="ECO:0000250"/>
    <property type="project" value="UniProtKB"/>
</dbReference>
<dbReference type="GO" id="GO:0005697">
    <property type="term" value="C:telomerase holoenzyme complex"/>
    <property type="evidence" value="ECO:0000250"/>
    <property type="project" value="UniProtKB"/>
</dbReference>
<dbReference type="GO" id="GO:0042393">
    <property type="term" value="F:histone binding"/>
    <property type="evidence" value="ECO:0007669"/>
    <property type="project" value="Ensembl"/>
</dbReference>
<dbReference type="GO" id="GO:0042802">
    <property type="term" value="F:identical protein binding"/>
    <property type="evidence" value="ECO:0007669"/>
    <property type="project" value="Ensembl"/>
</dbReference>
<dbReference type="GO" id="GO:0140597">
    <property type="term" value="F:protein carrier chaperone"/>
    <property type="evidence" value="ECO:0007669"/>
    <property type="project" value="Ensembl"/>
</dbReference>
<dbReference type="GO" id="GO:0044877">
    <property type="term" value="F:protein-containing complex binding"/>
    <property type="evidence" value="ECO:0007669"/>
    <property type="project" value="Ensembl"/>
</dbReference>
<dbReference type="GO" id="GO:0051087">
    <property type="term" value="F:protein-folding chaperone binding"/>
    <property type="evidence" value="ECO:0007669"/>
    <property type="project" value="Ensembl"/>
</dbReference>
<dbReference type="GO" id="GO:0003723">
    <property type="term" value="F:RNA binding"/>
    <property type="evidence" value="ECO:0000250"/>
    <property type="project" value="UniProtKB"/>
</dbReference>
<dbReference type="GO" id="GO:0140691">
    <property type="term" value="F:RNA folding chaperone"/>
    <property type="evidence" value="ECO:0007669"/>
    <property type="project" value="Ensembl"/>
</dbReference>
<dbReference type="GO" id="GO:0070034">
    <property type="term" value="F:telomerase RNA binding"/>
    <property type="evidence" value="ECO:0000250"/>
    <property type="project" value="UniProtKB"/>
</dbReference>
<dbReference type="GO" id="GO:0031625">
    <property type="term" value="F:ubiquitin protein ligase binding"/>
    <property type="evidence" value="ECO:0007669"/>
    <property type="project" value="Ensembl"/>
</dbReference>
<dbReference type="GO" id="GO:0030576">
    <property type="term" value="P:Cajal body organization"/>
    <property type="evidence" value="ECO:0000250"/>
    <property type="project" value="UniProtKB"/>
</dbReference>
<dbReference type="GO" id="GO:0006281">
    <property type="term" value="P:DNA repair"/>
    <property type="evidence" value="ECO:0007669"/>
    <property type="project" value="UniProtKB-KW"/>
</dbReference>
<dbReference type="GO" id="GO:0045739">
    <property type="term" value="P:positive regulation of DNA repair"/>
    <property type="evidence" value="ECO:0000250"/>
    <property type="project" value="UniProtKB"/>
</dbReference>
<dbReference type="GO" id="GO:2000781">
    <property type="term" value="P:positive regulation of double-strand break repair"/>
    <property type="evidence" value="ECO:0000250"/>
    <property type="project" value="UniProtKB"/>
</dbReference>
<dbReference type="GO" id="GO:1905168">
    <property type="term" value="P:positive regulation of double-strand break repair via homologous recombination"/>
    <property type="evidence" value="ECO:0000250"/>
    <property type="project" value="UniProtKB"/>
</dbReference>
<dbReference type="GO" id="GO:2001034">
    <property type="term" value="P:positive regulation of double-strand break repair via nonhomologous end joining"/>
    <property type="evidence" value="ECO:0000250"/>
    <property type="project" value="UniProtKB"/>
</dbReference>
<dbReference type="GO" id="GO:1904851">
    <property type="term" value="P:positive regulation of establishment of protein localization to telomere"/>
    <property type="evidence" value="ECO:0007669"/>
    <property type="project" value="Ensembl"/>
</dbReference>
<dbReference type="GO" id="GO:0032212">
    <property type="term" value="P:positive regulation of telomere maintenance via telomerase"/>
    <property type="evidence" value="ECO:0007669"/>
    <property type="project" value="Ensembl"/>
</dbReference>
<dbReference type="GO" id="GO:1904867">
    <property type="term" value="P:protein localization to Cajal body"/>
    <property type="evidence" value="ECO:0000250"/>
    <property type="project" value="UniProtKB"/>
</dbReference>
<dbReference type="GO" id="GO:0034337">
    <property type="term" value="P:RNA folding"/>
    <property type="evidence" value="ECO:0000250"/>
    <property type="project" value="UniProtKB"/>
</dbReference>
<dbReference type="GO" id="GO:0090666">
    <property type="term" value="P:scaRNA localization to Cajal body"/>
    <property type="evidence" value="ECO:0000250"/>
    <property type="project" value="UniProtKB"/>
</dbReference>
<dbReference type="GO" id="GO:0090671">
    <property type="term" value="P:telomerase RNA localization to Cajal body"/>
    <property type="evidence" value="ECO:0007669"/>
    <property type="project" value="Ensembl"/>
</dbReference>
<dbReference type="GO" id="GO:0032203">
    <property type="term" value="P:telomere formation via telomerase"/>
    <property type="evidence" value="ECO:0000250"/>
    <property type="project" value="UniProtKB"/>
</dbReference>
<dbReference type="GO" id="GO:0007004">
    <property type="term" value="P:telomere maintenance via telomerase"/>
    <property type="evidence" value="ECO:0000250"/>
    <property type="project" value="UniProtKB"/>
</dbReference>
<dbReference type="FunFam" id="2.130.10.10:FF:000453">
    <property type="entry name" value="Telomerase Cajal body protein 1"/>
    <property type="match status" value="1"/>
</dbReference>
<dbReference type="FunFam" id="2.130.10.10:FF:001269">
    <property type="entry name" value="telomerase Cajal body protein 1"/>
    <property type="match status" value="1"/>
</dbReference>
<dbReference type="Gene3D" id="2.130.10.10">
    <property type="entry name" value="YVTN repeat-like/Quinoprotein amine dehydrogenase"/>
    <property type="match status" value="1"/>
</dbReference>
<dbReference type="InterPro" id="IPR051150">
    <property type="entry name" value="SWT21/TCAB1_mRNA_Telomere"/>
</dbReference>
<dbReference type="InterPro" id="IPR015943">
    <property type="entry name" value="WD40/YVTN_repeat-like_dom_sf"/>
</dbReference>
<dbReference type="InterPro" id="IPR019775">
    <property type="entry name" value="WD40_repeat_CS"/>
</dbReference>
<dbReference type="InterPro" id="IPR036322">
    <property type="entry name" value="WD40_repeat_dom_sf"/>
</dbReference>
<dbReference type="InterPro" id="IPR001680">
    <property type="entry name" value="WD40_rpt"/>
</dbReference>
<dbReference type="PANTHER" id="PTHR13211">
    <property type="entry name" value="TELOMERASE CAJAL BODY PROTEIN 1"/>
    <property type="match status" value="1"/>
</dbReference>
<dbReference type="PANTHER" id="PTHR13211:SF0">
    <property type="entry name" value="TELOMERASE CAJAL BODY PROTEIN 1"/>
    <property type="match status" value="1"/>
</dbReference>
<dbReference type="Pfam" id="PF00400">
    <property type="entry name" value="WD40"/>
    <property type="match status" value="5"/>
</dbReference>
<dbReference type="SMART" id="SM00320">
    <property type="entry name" value="WD40"/>
    <property type="match status" value="5"/>
</dbReference>
<dbReference type="SUPFAM" id="SSF50978">
    <property type="entry name" value="WD40 repeat-like"/>
    <property type="match status" value="1"/>
</dbReference>
<dbReference type="PROSITE" id="PS00678">
    <property type="entry name" value="WD_REPEATS_1"/>
    <property type="match status" value="1"/>
</dbReference>
<dbReference type="PROSITE" id="PS50082">
    <property type="entry name" value="WD_REPEATS_2"/>
    <property type="match status" value="1"/>
</dbReference>
<dbReference type="PROSITE" id="PS50294">
    <property type="entry name" value="WD_REPEATS_REGION"/>
    <property type="match status" value="1"/>
</dbReference>
<sequence length="538" mass="58501">MKTSEERLVVPDSLSSDQAPAPVPQGSPVDENTDSEPVPQPCGGDDRSQVAADSVAGSVVFQEPQQGHPLPLSAPLEVEFNTPGELSPRIEEQELSENVSLPVEDTNQPELASGEDVEGVSEEPGPVDEGDAFWSYNFSQVPRYLSGSWSEFRAHSENFLKGCKWAPDGSCILTNSADNTLRIYNLPPELYSATEQVDYAEMVPVLRMVEGDTIYDYCWYSLMSSSQPDTSYVASSSRENPIHIWDAFTGELRASFRAYNHLDELTAAHSLCFSPDGSQLFCGFNRTVRVFSTSRPGRDCEVRATFAKKQGQSGIISCIAFSPSQPLYACGSYGRTLGLYAWDDGSPLALLGGHQGGITHLCFHPDGNLFFSGARKDAELLCWDLRQPGHLLWSLSREVTTNQRIYFDLDPSGQFLVSGNTNGMVSVWDISGAFGDSSKLGPVMTFLPQKDCTNGVSLHPSLPLLATASGQRMFPEPTNSGDEGEPEGDLPLLSLCHAHPEWQLQLWWCGGGPDPSSPNDPQDEKGQGRAEGCGDGLI</sequence>
<comment type="function">
    <text evidence="1">RNA chaperone that plays a key role in telomere maintenance and RNA localization to Cajal bodies. Specifically recognizes and binds the Cajal body box (CAB box) present in both small Cajal body RNAs (scaRNAs) and telomerase RNA template component (TERC). Essential component of the telomerase holoenzyme complex, a ribonucleoprotein complex essential for the replication of chromosome termini that elongates telomeres in most eukaryotes. In the telomerase holoenzyme complex, required to stimulate the catalytic activity of the complex. Acts by specifically binding the CAB box of the TERC RNA and controlling the folding of the CR4/CR5 region of the TERC RNA, a critical step for telomerase activity. In addition, also controls telomerase holoenzyme complex localization to Cajal body. During S phase, required for delivery of TERC to telomeres during S phase and for telomerase activity. In addition to its role in telomere maintenance, also required for Cajal body formation, probably by mediating localization of scaRNAs to Cajal bodies. Also plays a role in DNA repair: relocalizes to sites of DNA double-strand breaks in response to DNA damage and promotes the repair of DNA double-strand breaks. Acts by recruiting the ubiquitin ligase RNF8 to DNA breaks and promote both homologous recombination (HR) and non-homologous end joining (NHEJ).</text>
</comment>
<comment type="subunit">
    <text evidence="1">Component of the telomerase holoenzyme complex composed of one molecule of TERT, one molecule of WRAP53/TCAB1, two molecules of H/ACA ribonucleoprotein complex subunits DKC1, NOP10, NHP2 and GAR1, and a telomerase RNA template component (TERC). The telomerase holoenzyme complex is associated with TEP1, SMG6/EST1A and POT1. Interacts with the chaperonin-containing T-complex (TRiC) complex; which mediates the folding of WRAP53/TCAB1. Interacts with COIL. Interacts with SMN1. Interacts with RNF8. Interacts with histone H2AX.</text>
</comment>
<comment type="subcellular location">
    <subcellularLocation>
        <location evidence="1">Nucleus</location>
        <location evidence="1">Cajal body</location>
    </subcellularLocation>
    <subcellularLocation>
        <location evidence="1">Chromosome</location>
        <location evidence="1">Telomere</location>
    </subcellularLocation>
    <subcellularLocation>
        <location evidence="1">Chromosome</location>
    </subcellularLocation>
    <text evidence="1">Released from telomerase RNA template component (TERC) in mitotic cells coincident with delocalization from Cajal bodies. In response to DNA damage, localizes to sites of DNA double-strand breaks.</text>
</comment>
<comment type="tissue specificity">
    <text evidence="4">Preferentially expressed in testis.</text>
</comment>
<comment type="similarity">
    <text evidence="6">Belongs to the TCAB1 family.</text>
</comment>
<gene>
    <name evidence="1" type="primary">Wrap53</name>
    <name evidence="5" type="synonym">Gnb5</name>
    <name evidence="1" type="synonym">Tcab1</name>
    <name evidence="1" type="synonym">Wdr79</name>
</gene>
<evidence type="ECO:0000250" key="1">
    <source>
        <dbReference type="UniProtKB" id="Q9BUR4"/>
    </source>
</evidence>
<evidence type="ECO:0000255" key="2"/>
<evidence type="ECO:0000256" key="3">
    <source>
        <dbReference type="SAM" id="MobiDB-lite"/>
    </source>
</evidence>
<evidence type="ECO:0000269" key="4">
    <source>
    </source>
</evidence>
<evidence type="ECO:0000303" key="5">
    <source>
    </source>
</evidence>
<evidence type="ECO:0000305" key="6"/>
<feature type="chain" id="PRO_0000367317" description="Telomerase Cajal body protein 1">
    <location>
        <begin position="1"/>
        <end position="538"/>
    </location>
</feature>
<feature type="repeat" description="WD 1" evidence="2">
    <location>
        <begin position="154"/>
        <end position="194"/>
    </location>
</feature>
<feature type="repeat" description="WD 2" evidence="2">
    <location>
        <begin position="210"/>
        <end position="255"/>
    </location>
</feature>
<feature type="repeat" description="WD 3" evidence="2">
    <location>
        <begin position="260"/>
        <end position="301"/>
    </location>
</feature>
<feature type="repeat" description="WD 4" evidence="2">
    <location>
        <begin position="311"/>
        <end position="352"/>
    </location>
</feature>
<feature type="repeat" description="WD 5" evidence="2">
    <location>
        <begin position="353"/>
        <end position="393"/>
    </location>
</feature>
<feature type="repeat" description="WD 6" evidence="2">
    <location>
        <begin position="399"/>
        <end position="438"/>
    </location>
</feature>
<feature type="region of interest" description="Disordered" evidence="3">
    <location>
        <begin position="1"/>
        <end position="53"/>
    </location>
</feature>
<feature type="region of interest" description="Disordered" evidence="3">
    <location>
        <begin position="92"/>
        <end position="128"/>
    </location>
</feature>
<feature type="region of interest" description="Disordered" evidence="3">
    <location>
        <begin position="471"/>
        <end position="491"/>
    </location>
</feature>
<feature type="region of interest" description="Disordered" evidence="3">
    <location>
        <begin position="509"/>
        <end position="538"/>
    </location>
</feature>
<feature type="compositionally biased region" description="Acidic residues" evidence="3">
    <location>
        <begin position="113"/>
        <end position="128"/>
    </location>
</feature>
<feature type="compositionally biased region" description="Gly residues" evidence="3">
    <location>
        <begin position="529"/>
        <end position="538"/>
    </location>
</feature>
<feature type="modified residue" description="Phosphoserine" evidence="1">
    <location>
        <position position="27"/>
    </location>
</feature>
<feature type="modified residue" description="Phosphoserine" evidence="1">
    <location>
        <position position="87"/>
    </location>
</feature>
<feature type="modified residue" description="Phosphothreonine" evidence="1">
    <location>
        <position position="478"/>
    </location>
</feature>
<feature type="modified residue" description="Phosphoserine" evidence="1">
    <location>
        <position position="480"/>
    </location>
</feature>
<name>TCAB1_MESAU</name>
<reference key="1">
    <citation type="journal article" date="1995" name="Mamm. Genome">
        <title>The Gnb5 gene is a novel beta-transducin homolog transcribed from a divergent promoter located immediately upstream of the Syrian hamster p53 P1 promoter.</title>
        <authorList>
            <person name="Albor A."/>
            <person name="Notario V."/>
        </authorList>
    </citation>
    <scope>NUCLEOTIDE SEQUENCE [MRNA]</scope>
    <scope>TISSUE SPECIFICITY</scope>
</reference>
<keyword id="KW-0143">Chaperone</keyword>
<keyword id="KW-0158">Chromosome</keyword>
<keyword id="KW-0227">DNA damage</keyword>
<keyword id="KW-0234">DNA repair</keyword>
<keyword id="KW-0539">Nucleus</keyword>
<keyword id="KW-0597">Phosphoprotein</keyword>
<keyword id="KW-1185">Reference proteome</keyword>
<keyword id="KW-0677">Repeat</keyword>
<keyword id="KW-0694">RNA-binding</keyword>
<keyword id="KW-0779">Telomere</keyword>
<keyword id="KW-0853">WD repeat</keyword>